<organism>
    <name type="scientific">Lactobacillus johnsonii (strain CNCM I-12250 / La1 / NCC 533)</name>
    <dbReference type="NCBI Taxonomy" id="257314"/>
    <lineage>
        <taxon>Bacteria</taxon>
        <taxon>Bacillati</taxon>
        <taxon>Bacillota</taxon>
        <taxon>Bacilli</taxon>
        <taxon>Lactobacillales</taxon>
        <taxon>Lactobacillaceae</taxon>
        <taxon>Lactobacillus</taxon>
    </lineage>
</organism>
<keyword id="KW-0143">Chaperone</keyword>
<keyword id="KW-0963">Cytoplasm</keyword>
<keyword id="KW-0235">DNA replication</keyword>
<keyword id="KW-0479">Metal-binding</keyword>
<keyword id="KW-0677">Repeat</keyword>
<keyword id="KW-0346">Stress response</keyword>
<keyword id="KW-0862">Zinc</keyword>
<keyword id="KW-0863">Zinc-finger</keyword>
<accession>Q74IT7</accession>
<reference key="1">
    <citation type="journal article" date="2004" name="Proc. Natl. Acad. Sci. U.S.A.">
        <title>The genome sequence of the probiotic intestinal bacterium Lactobacillus johnsonii NCC 533.</title>
        <authorList>
            <person name="Pridmore R.D."/>
            <person name="Berger B."/>
            <person name="Desiere F."/>
            <person name="Vilanova D."/>
            <person name="Barretto C."/>
            <person name="Pittet A.-C."/>
            <person name="Zwahlen M.-C."/>
            <person name="Rouvet M."/>
            <person name="Altermann E."/>
            <person name="Barrangou R."/>
            <person name="Mollet B."/>
            <person name="Mercenier A."/>
            <person name="Klaenhammer T."/>
            <person name="Arigoni F."/>
            <person name="Schell M.A."/>
        </authorList>
    </citation>
    <scope>NUCLEOTIDE SEQUENCE [LARGE SCALE GENOMIC DNA]</scope>
    <source>
        <strain>CNCM I-1225 / La1 / NCC 533</strain>
    </source>
</reference>
<evidence type="ECO:0000255" key="1">
    <source>
        <dbReference type="HAMAP-Rule" id="MF_01152"/>
    </source>
</evidence>
<dbReference type="EMBL" id="AE017198">
    <property type="protein sequence ID" value="AAS09246.1"/>
    <property type="molecule type" value="Genomic_DNA"/>
</dbReference>
<dbReference type="RefSeq" id="WP_011162230.1">
    <property type="nucleotide sequence ID" value="NC_005362.1"/>
</dbReference>
<dbReference type="SMR" id="Q74IT7"/>
<dbReference type="GeneID" id="83570195"/>
<dbReference type="KEGG" id="ljo:LJ_1478"/>
<dbReference type="eggNOG" id="COG0484">
    <property type="taxonomic scope" value="Bacteria"/>
</dbReference>
<dbReference type="HOGENOM" id="CLU_017633_0_7_9"/>
<dbReference type="Proteomes" id="UP000000581">
    <property type="component" value="Chromosome"/>
</dbReference>
<dbReference type="GO" id="GO:0005737">
    <property type="term" value="C:cytoplasm"/>
    <property type="evidence" value="ECO:0007669"/>
    <property type="project" value="UniProtKB-SubCell"/>
</dbReference>
<dbReference type="GO" id="GO:0005524">
    <property type="term" value="F:ATP binding"/>
    <property type="evidence" value="ECO:0007669"/>
    <property type="project" value="InterPro"/>
</dbReference>
<dbReference type="GO" id="GO:0031072">
    <property type="term" value="F:heat shock protein binding"/>
    <property type="evidence" value="ECO:0007669"/>
    <property type="project" value="InterPro"/>
</dbReference>
<dbReference type="GO" id="GO:0051082">
    <property type="term" value="F:unfolded protein binding"/>
    <property type="evidence" value="ECO:0007669"/>
    <property type="project" value="UniProtKB-UniRule"/>
</dbReference>
<dbReference type="GO" id="GO:0008270">
    <property type="term" value="F:zinc ion binding"/>
    <property type="evidence" value="ECO:0007669"/>
    <property type="project" value="UniProtKB-UniRule"/>
</dbReference>
<dbReference type="GO" id="GO:0051085">
    <property type="term" value="P:chaperone cofactor-dependent protein refolding"/>
    <property type="evidence" value="ECO:0007669"/>
    <property type="project" value="TreeGrafter"/>
</dbReference>
<dbReference type="GO" id="GO:0006260">
    <property type="term" value="P:DNA replication"/>
    <property type="evidence" value="ECO:0007669"/>
    <property type="project" value="UniProtKB-KW"/>
</dbReference>
<dbReference type="GO" id="GO:0042026">
    <property type="term" value="P:protein refolding"/>
    <property type="evidence" value="ECO:0007669"/>
    <property type="project" value="TreeGrafter"/>
</dbReference>
<dbReference type="GO" id="GO:0009408">
    <property type="term" value="P:response to heat"/>
    <property type="evidence" value="ECO:0007669"/>
    <property type="project" value="InterPro"/>
</dbReference>
<dbReference type="CDD" id="cd06257">
    <property type="entry name" value="DnaJ"/>
    <property type="match status" value="1"/>
</dbReference>
<dbReference type="CDD" id="cd10747">
    <property type="entry name" value="DnaJ_C"/>
    <property type="match status" value="1"/>
</dbReference>
<dbReference type="CDD" id="cd10719">
    <property type="entry name" value="DnaJ_zf"/>
    <property type="match status" value="1"/>
</dbReference>
<dbReference type="FunFam" id="2.60.260.20:FF:000005">
    <property type="entry name" value="Chaperone protein dnaJ 1, mitochondrial"/>
    <property type="match status" value="1"/>
</dbReference>
<dbReference type="FunFam" id="1.10.287.110:FF:000031">
    <property type="entry name" value="Molecular chaperone DnaJ"/>
    <property type="match status" value="1"/>
</dbReference>
<dbReference type="FunFam" id="2.10.230.10:FF:000002">
    <property type="entry name" value="Molecular chaperone DnaJ"/>
    <property type="match status" value="1"/>
</dbReference>
<dbReference type="Gene3D" id="1.10.287.110">
    <property type="entry name" value="DnaJ domain"/>
    <property type="match status" value="1"/>
</dbReference>
<dbReference type="Gene3D" id="2.10.230.10">
    <property type="entry name" value="Heat shock protein DnaJ, cysteine-rich domain"/>
    <property type="match status" value="1"/>
</dbReference>
<dbReference type="Gene3D" id="2.60.260.20">
    <property type="entry name" value="Urease metallochaperone UreE, N-terminal domain"/>
    <property type="match status" value="2"/>
</dbReference>
<dbReference type="HAMAP" id="MF_01152">
    <property type="entry name" value="DnaJ"/>
    <property type="match status" value="1"/>
</dbReference>
<dbReference type="InterPro" id="IPR012724">
    <property type="entry name" value="DnaJ"/>
</dbReference>
<dbReference type="InterPro" id="IPR002939">
    <property type="entry name" value="DnaJ_C"/>
</dbReference>
<dbReference type="InterPro" id="IPR001623">
    <property type="entry name" value="DnaJ_domain"/>
</dbReference>
<dbReference type="InterPro" id="IPR018253">
    <property type="entry name" value="DnaJ_domain_CS"/>
</dbReference>
<dbReference type="InterPro" id="IPR008971">
    <property type="entry name" value="HSP40/DnaJ_pept-bd"/>
</dbReference>
<dbReference type="InterPro" id="IPR001305">
    <property type="entry name" value="HSP_DnaJ_Cys-rich_dom"/>
</dbReference>
<dbReference type="InterPro" id="IPR036410">
    <property type="entry name" value="HSP_DnaJ_Cys-rich_dom_sf"/>
</dbReference>
<dbReference type="InterPro" id="IPR036869">
    <property type="entry name" value="J_dom_sf"/>
</dbReference>
<dbReference type="NCBIfam" id="TIGR02349">
    <property type="entry name" value="DnaJ_bact"/>
    <property type="match status" value="1"/>
</dbReference>
<dbReference type="NCBIfam" id="NF008035">
    <property type="entry name" value="PRK10767.1"/>
    <property type="match status" value="1"/>
</dbReference>
<dbReference type="NCBIfam" id="NF010869">
    <property type="entry name" value="PRK14276.1"/>
    <property type="match status" value="1"/>
</dbReference>
<dbReference type="PANTHER" id="PTHR43096:SF48">
    <property type="entry name" value="CHAPERONE PROTEIN DNAJ"/>
    <property type="match status" value="1"/>
</dbReference>
<dbReference type="PANTHER" id="PTHR43096">
    <property type="entry name" value="DNAJ HOMOLOG 1, MITOCHONDRIAL-RELATED"/>
    <property type="match status" value="1"/>
</dbReference>
<dbReference type="Pfam" id="PF00226">
    <property type="entry name" value="DnaJ"/>
    <property type="match status" value="1"/>
</dbReference>
<dbReference type="Pfam" id="PF01556">
    <property type="entry name" value="DnaJ_C"/>
    <property type="match status" value="1"/>
</dbReference>
<dbReference type="Pfam" id="PF00684">
    <property type="entry name" value="DnaJ_CXXCXGXG"/>
    <property type="match status" value="1"/>
</dbReference>
<dbReference type="PRINTS" id="PR00625">
    <property type="entry name" value="JDOMAIN"/>
</dbReference>
<dbReference type="SMART" id="SM00271">
    <property type="entry name" value="DnaJ"/>
    <property type="match status" value="1"/>
</dbReference>
<dbReference type="SUPFAM" id="SSF46565">
    <property type="entry name" value="Chaperone J-domain"/>
    <property type="match status" value="1"/>
</dbReference>
<dbReference type="SUPFAM" id="SSF57938">
    <property type="entry name" value="DnaJ/Hsp40 cysteine-rich domain"/>
    <property type="match status" value="1"/>
</dbReference>
<dbReference type="SUPFAM" id="SSF49493">
    <property type="entry name" value="HSP40/DnaJ peptide-binding domain"/>
    <property type="match status" value="2"/>
</dbReference>
<dbReference type="PROSITE" id="PS00636">
    <property type="entry name" value="DNAJ_1"/>
    <property type="match status" value="1"/>
</dbReference>
<dbReference type="PROSITE" id="PS50076">
    <property type="entry name" value="DNAJ_2"/>
    <property type="match status" value="1"/>
</dbReference>
<dbReference type="PROSITE" id="PS51188">
    <property type="entry name" value="ZF_CR"/>
    <property type="match status" value="1"/>
</dbReference>
<gene>
    <name evidence="1" type="primary">dnaJ</name>
    <name type="ordered locus">LJ_1478</name>
</gene>
<feature type="chain" id="PRO_0000070801" description="Chaperone protein DnaJ">
    <location>
        <begin position="1"/>
        <end position="388"/>
    </location>
</feature>
<feature type="domain" description="J" evidence="1">
    <location>
        <begin position="5"/>
        <end position="69"/>
    </location>
</feature>
<feature type="repeat" description="CXXCXGXG motif">
    <location>
        <begin position="158"/>
        <end position="165"/>
    </location>
</feature>
<feature type="repeat" description="CXXCXGXG motif">
    <location>
        <begin position="175"/>
        <end position="182"/>
    </location>
</feature>
<feature type="repeat" description="CXXCXGXG motif">
    <location>
        <begin position="201"/>
        <end position="208"/>
    </location>
</feature>
<feature type="repeat" description="CXXCXGXG motif">
    <location>
        <begin position="215"/>
        <end position="222"/>
    </location>
</feature>
<feature type="zinc finger region" description="CR-type" evidence="1">
    <location>
        <begin position="145"/>
        <end position="227"/>
    </location>
</feature>
<feature type="binding site" evidence="1">
    <location>
        <position position="158"/>
    </location>
    <ligand>
        <name>Zn(2+)</name>
        <dbReference type="ChEBI" id="CHEBI:29105"/>
        <label>1</label>
    </ligand>
</feature>
<feature type="binding site" evidence="1">
    <location>
        <position position="161"/>
    </location>
    <ligand>
        <name>Zn(2+)</name>
        <dbReference type="ChEBI" id="CHEBI:29105"/>
        <label>1</label>
    </ligand>
</feature>
<feature type="binding site" evidence="1">
    <location>
        <position position="175"/>
    </location>
    <ligand>
        <name>Zn(2+)</name>
        <dbReference type="ChEBI" id="CHEBI:29105"/>
        <label>2</label>
    </ligand>
</feature>
<feature type="binding site" evidence="1">
    <location>
        <position position="178"/>
    </location>
    <ligand>
        <name>Zn(2+)</name>
        <dbReference type="ChEBI" id="CHEBI:29105"/>
        <label>2</label>
    </ligand>
</feature>
<feature type="binding site" evidence="1">
    <location>
        <position position="201"/>
    </location>
    <ligand>
        <name>Zn(2+)</name>
        <dbReference type="ChEBI" id="CHEBI:29105"/>
        <label>2</label>
    </ligand>
</feature>
<feature type="binding site" evidence="1">
    <location>
        <position position="204"/>
    </location>
    <ligand>
        <name>Zn(2+)</name>
        <dbReference type="ChEBI" id="CHEBI:29105"/>
        <label>2</label>
    </ligand>
</feature>
<feature type="binding site" evidence="1">
    <location>
        <position position="215"/>
    </location>
    <ligand>
        <name>Zn(2+)</name>
        <dbReference type="ChEBI" id="CHEBI:29105"/>
        <label>1</label>
    </ligand>
</feature>
<feature type="binding site" evidence="1">
    <location>
        <position position="218"/>
    </location>
    <ligand>
        <name>Zn(2+)</name>
        <dbReference type="ChEBI" id="CHEBI:29105"/>
        <label>1</label>
    </ligand>
</feature>
<protein>
    <recommendedName>
        <fullName evidence="1">Chaperone protein DnaJ</fullName>
    </recommendedName>
</protein>
<name>DNAJ_LACJO</name>
<sequence length="388" mass="41803">MAQRDYYDVLGVDKNASESEISKAYRKLAKKYHPDLNHEPGAEEKYKEVNEAYEVLHDKQKRAQYDQFGQAGVNGQGGFGGQGFGGFGGQGGYSSQGFGDFGDIFGDIFGSAFGGGRSRVDPTAPQKGQDLDYTMTIDFMDAIKGKKTDITYTRSEVCPTCDGSGAEKGTHPITCDKCHGSGVMTVTRQTPLGVIQQQTTCDKCGGRGTIIEHPCQTCHGQGTVDKKQTLQVTVPAGIDNGQQIRLSGQGEAGKNGGPYGDLYIVFRVKPSKEFRRNGTTIYTEAPISFAQAALGDKIRVNTVHGPVDLTIPAGTQPNTNFKLRGQGVPKINGTGNGDQEVTVKVVIPKKINDKQKEALVDYVKAGGGNISPQEKNFFERLKDKLNGE</sequence>
<proteinExistence type="inferred from homology"/>
<comment type="function">
    <text evidence="1">Participates actively in the response to hyperosmotic and heat shock by preventing the aggregation of stress-denatured proteins and by disaggregating proteins, also in an autonomous, DnaK-independent fashion. Unfolded proteins bind initially to DnaJ; upon interaction with the DnaJ-bound protein, DnaK hydrolyzes its bound ATP, resulting in the formation of a stable complex. GrpE releases ADP from DnaK; ATP binding to DnaK triggers the release of the substrate protein, thus completing the reaction cycle. Several rounds of ATP-dependent interactions between DnaJ, DnaK and GrpE are required for fully efficient folding. Also involved, together with DnaK and GrpE, in the DNA replication of plasmids through activation of initiation proteins.</text>
</comment>
<comment type="cofactor">
    <cofactor evidence="1">
        <name>Zn(2+)</name>
        <dbReference type="ChEBI" id="CHEBI:29105"/>
    </cofactor>
    <text evidence="1">Binds 2 Zn(2+) ions per monomer.</text>
</comment>
<comment type="subunit">
    <text evidence="1">Homodimer.</text>
</comment>
<comment type="subcellular location">
    <subcellularLocation>
        <location evidence="1">Cytoplasm</location>
    </subcellularLocation>
</comment>
<comment type="domain">
    <text evidence="1">The J domain is necessary and sufficient to stimulate DnaK ATPase activity. Zinc center 1 plays an important role in the autonomous, DnaK-independent chaperone activity of DnaJ. Zinc center 2 is essential for interaction with DnaK and for DnaJ activity.</text>
</comment>
<comment type="similarity">
    <text evidence="1">Belongs to the DnaJ family.</text>
</comment>